<accession>A0LTM4</accession>
<reference key="1">
    <citation type="journal article" date="2009" name="Genome Res.">
        <title>Complete genome of the cellulolytic thermophile Acidothermus cellulolyticus 11B provides insights into its ecophysiological and evolutionary adaptations.</title>
        <authorList>
            <person name="Barabote R.D."/>
            <person name="Xie G."/>
            <person name="Leu D.H."/>
            <person name="Normand P."/>
            <person name="Necsulea A."/>
            <person name="Daubin V."/>
            <person name="Medigue C."/>
            <person name="Adney W.S."/>
            <person name="Xu X.C."/>
            <person name="Lapidus A."/>
            <person name="Parales R.E."/>
            <person name="Detter C."/>
            <person name="Pujic P."/>
            <person name="Bruce D."/>
            <person name="Lavire C."/>
            <person name="Challacombe J.F."/>
            <person name="Brettin T.S."/>
            <person name="Berry A.M."/>
        </authorList>
    </citation>
    <scope>NUCLEOTIDE SEQUENCE [LARGE SCALE GENOMIC DNA]</scope>
    <source>
        <strain>ATCC 43068 / DSM 8971 / 11B</strain>
    </source>
</reference>
<name>MURC_ACIC1</name>
<comment type="function">
    <text evidence="1">Cell wall formation.</text>
</comment>
<comment type="catalytic activity">
    <reaction evidence="1">
        <text>UDP-N-acetyl-alpha-D-muramate + L-alanine + ATP = UDP-N-acetyl-alpha-D-muramoyl-L-alanine + ADP + phosphate + H(+)</text>
        <dbReference type="Rhea" id="RHEA:23372"/>
        <dbReference type="ChEBI" id="CHEBI:15378"/>
        <dbReference type="ChEBI" id="CHEBI:30616"/>
        <dbReference type="ChEBI" id="CHEBI:43474"/>
        <dbReference type="ChEBI" id="CHEBI:57972"/>
        <dbReference type="ChEBI" id="CHEBI:70757"/>
        <dbReference type="ChEBI" id="CHEBI:83898"/>
        <dbReference type="ChEBI" id="CHEBI:456216"/>
        <dbReference type="EC" id="6.3.2.8"/>
    </reaction>
</comment>
<comment type="pathway">
    <text evidence="1">Cell wall biogenesis; peptidoglycan biosynthesis.</text>
</comment>
<comment type="subcellular location">
    <subcellularLocation>
        <location evidence="1">Cytoplasm</location>
    </subcellularLocation>
</comment>
<comment type="similarity">
    <text evidence="1">Belongs to the MurCDEF family.</text>
</comment>
<proteinExistence type="inferred from homology"/>
<sequence length="477" mass="49617">MTSDQSLSHHEPLPLERLGRTHFVGVGGGGMSGIARIFLSRGVPVSGCDARESRVLAALRAFGARVTVGHDPAHLSDVDTVVASTAVPPTTPELAVARERGLPVLPRAAALASVMAGRRGVAVAGTHGKTTTTSMVVRALQRCGADPSFAIGADLGEPGSNAHDGTGSIFVAEADESDESFLLLPFHAAVVTNVEADHLNHYADLAAIHAAFDRFVAKVPDGGFLVACTDDPGAEEIASRAARRGTVVRRYGTSPRADVRLVDLRLEVAGSRFAVAMDGTVLGELQLRVPGAHNALNATAAVAVTVGLGFPFSEVAEGLADFTGARRRFQPQGEVAGIRVFDDYAHHPTEIAATLRAARVVADGGRLVVAFQPHHYYRTADFRTEFGAALALADEVVVMEVYAPGETPLPGGTGAALAAAVPLPGSAVVFEPSWSAVPEHLAARARPGDLIVTMGAGGDVALLPPLVLDALRRRWQG</sequence>
<organism>
    <name type="scientific">Acidothermus cellulolyticus (strain ATCC 43068 / DSM 8971 / 11B)</name>
    <dbReference type="NCBI Taxonomy" id="351607"/>
    <lineage>
        <taxon>Bacteria</taxon>
        <taxon>Bacillati</taxon>
        <taxon>Actinomycetota</taxon>
        <taxon>Actinomycetes</taxon>
        <taxon>Acidothermales</taxon>
        <taxon>Acidothermaceae</taxon>
        <taxon>Acidothermus</taxon>
    </lineage>
</organism>
<evidence type="ECO:0000255" key="1">
    <source>
        <dbReference type="HAMAP-Rule" id="MF_00046"/>
    </source>
</evidence>
<protein>
    <recommendedName>
        <fullName evidence="1">UDP-N-acetylmuramate--L-alanine ligase</fullName>
        <ecNumber evidence="1">6.3.2.8</ecNumber>
    </recommendedName>
    <alternativeName>
        <fullName evidence="1">UDP-N-acetylmuramoyl-L-alanine synthetase</fullName>
    </alternativeName>
</protein>
<keyword id="KW-0067">ATP-binding</keyword>
<keyword id="KW-0131">Cell cycle</keyword>
<keyword id="KW-0132">Cell division</keyword>
<keyword id="KW-0133">Cell shape</keyword>
<keyword id="KW-0961">Cell wall biogenesis/degradation</keyword>
<keyword id="KW-0963">Cytoplasm</keyword>
<keyword id="KW-0436">Ligase</keyword>
<keyword id="KW-0547">Nucleotide-binding</keyword>
<keyword id="KW-0573">Peptidoglycan synthesis</keyword>
<keyword id="KW-1185">Reference proteome</keyword>
<feature type="chain" id="PRO_0000336807" description="UDP-N-acetylmuramate--L-alanine ligase">
    <location>
        <begin position="1"/>
        <end position="477"/>
    </location>
</feature>
<feature type="binding site" evidence="1">
    <location>
        <begin position="125"/>
        <end position="131"/>
    </location>
    <ligand>
        <name>ATP</name>
        <dbReference type="ChEBI" id="CHEBI:30616"/>
    </ligand>
</feature>
<dbReference type="EC" id="6.3.2.8" evidence="1"/>
<dbReference type="EMBL" id="CP000481">
    <property type="protein sequence ID" value="ABK52784.1"/>
    <property type="molecule type" value="Genomic_DNA"/>
</dbReference>
<dbReference type="RefSeq" id="WP_011719847.1">
    <property type="nucleotide sequence ID" value="NC_008578.1"/>
</dbReference>
<dbReference type="SMR" id="A0LTM4"/>
<dbReference type="FunCoup" id="A0LTM4">
    <property type="interactions" value="48"/>
</dbReference>
<dbReference type="STRING" id="351607.Acel_1011"/>
<dbReference type="KEGG" id="ace:Acel_1011"/>
<dbReference type="eggNOG" id="COG0773">
    <property type="taxonomic scope" value="Bacteria"/>
</dbReference>
<dbReference type="HOGENOM" id="CLU_028104_2_2_11"/>
<dbReference type="InParanoid" id="A0LTM4"/>
<dbReference type="OrthoDB" id="9804126at2"/>
<dbReference type="UniPathway" id="UPA00219"/>
<dbReference type="Proteomes" id="UP000008221">
    <property type="component" value="Chromosome"/>
</dbReference>
<dbReference type="GO" id="GO:0005737">
    <property type="term" value="C:cytoplasm"/>
    <property type="evidence" value="ECO:0007669"/>
    <property type="project" value="UniProtKB-SubCell"/>
</dbReference>
<dbReference type="GO" id="GO:0005524">
    <property type="term" value="F:ATP binding"/>
    <property type="evidence" value="ECO:0007669"/>
    <property type="project" value="UniProtKB-UniRule"/>
</dbReference>
<dbReference type="GO" id="GO:0008763">
    <property type="term" value="F:UDP-N-acetylmuramate-L-alanine ligase activity"/>
    <property type="evidence" value="ECO:0007669"/>
    <property type="project" value="UniProtKB-UniRule"/>
</dbReference>
<dbReference type="GO" id="GO:0051301">
    <property type="term" value="P:cell division"/>
    <property type="evidence" value="ECO:0007669"/>
    <property type="project" value="UniProtKB-KW"/>
</dbReference>
<dbReference type="GO" id="GO:0071555">
    <property type="term" value="P:cell wall organization"/>
    <property type="evidence" value="ECO:0007669"/>
    <property type="project" value="UniProtKB-KW"/>
</dbReference>
<dbReference type="GO" id="GO:0009252">
    <property type="term" value="P:peptidoglycan biosynthetic process"/>
    <property type="evidence" value="ECO:0007669"/>
    <property type="project" value="UniProtKB-UniRule"/>
</dbReference>
<dbReference type="GO" id="GO:0008360">
    <property type="term" value="P:regulation of cell shape"/>
    <property type="evidence" value="ECO:0007669"/>
    <property type="project" value="UniProtKB-KW"/>
</dbReference>
<dbReference type="Gene3D" id="3.90.190.20">
    <property type="entry name" value="Mur ligase, C-terminal domain"/>
    <property type="match status" value="1"/>
</dbReference>
<dbReference type="Gene3D" id="3.40.1190.10">
    <property type="entry name" value="Mur-like, catalytic domain"/>
    <property type="match status" value="1"/>
</dbReference>
<dbReference type="Gene3D" id="3.40.50.720">
    <property type="entry name" value="NAD(P)-binding Rossmann-like Domain"/>
    <property type="match status" value="1"/>
</dbReference>
<dbReference type="HAMAP" id="MF_00046">
    <property type="entry name" value="MurC"/>
    <property type="match status" value="1"/>
</dbReference>
<dbReference type="InterPro" id="IPR036565">
    <property type="entry name" value="Mur-like_cat_sf"/>
</dbReference>
<dbReference type="InterPro" id="IPR004101">
    <property type="entry name" value="Mur_ligase_C"/>
</dbReference>
<dbReference type="InterPro" id="IPR036615">
    <property type="entry name" value="Mur_ligase_C_dom_sf"/>
</dbReference>
<dbReference type="InterPro" id="IPR013221">
    <property type="entry name" value="Mur_ligase_cen"/>
</dbReference>
<dbReference type="InterPro" id="IPR000713">
    <property type="entry name" value="Mur_ligase_N"/>
</dbReference>
<dbReference type="InterPro" id="IPR050061">
    <property type="entry name" value="MurCDEF_pg_biosynth"/>
</dbReference>
<dbReference type="InterPro" id="IPR005758">
    <property type="entry name" value="UDP-N-AcMur_Ala_ligase_MurC"/>
</dbReference>
<dbReference type="NCBIfam" id="TIGR01082">
    <property type="entry name" value="murC"/>
    <property type="match status" value="1"/>
</dbReference>
<dbReference type="PANTHER" id="PTHR43445:SF3">
    <property type="entry name" value="UDP-N-ACETYLMURAMATE--L-ALANINE LIGASE"/>
    <property type="match status" value="1"/>
</dbReference>
<dbReference type="PANTHER" id="PTHR43445">
    <property type="entry name" value="UDP-N-ACETYLMURAMATE--L-ALANINE LIGASE-RELATED"/>
    <property type="match status" value="1"/>
</dbReference>
<dbReference type="Pfam" id="PF01225">
    <property type="entry name" value="Mur_ligase"/>
    <property type="match status" value="1"/>
</dbReference>
<dbReference type="Pfam" id="PF02875">
    <property type="entry name" value="Mur_ligase_C"/>
    <property type="match status" value="1"/>
</dbReference>
<dbReference type="Pfam" id="PF08245">
    <property type="entry name" value="Mur_ligase_M"/>
    <property type="match status" value="1"/>
</dbReference>
<dbReference type="SUPFAM" id="SSF51984">
    <property type="entry name" value="MurCD N-terminal domain"/>
    <property type="match status" value="1"/>
</dbReference>
<dbReference type="SUPFAM" id="SSF53623">
    <property type="entry name" value="MurD-like peptide ligases, catalytic domain"/>
    <property type="match status" value="1"/>
</dbReference>
<dbReference type="SUPFAM" id="SSF53244">
    <property type="entry name" value="MurD-like peptide ligases, peptide-binding domain"/>
    <property type="match status" value="1"/>
</dbReference>
<gene>
    <name evidence="1" type="primary">murC</name>
    <name type="ordered locus">Acel_1011</name>
</gene>